<dbReference type="EC" id="2.1.1.166" evidence="1"/>
<dbReference type="EMBL" id="AM746676">
    <property type="protein sequence ID" value="CAN92149.1"/>
    <property type="molecule type" value="Genomic_DNA"/>
</dbReference>
<dbReference type="SMR" id="A9FQE4"/>
<dbReference type="STRING" id="448385.sce1990"/>
<dbReference type="KEGG" id="scl:sce1990"/>
<dbReference type="eggNOG" id="COG0293">
    <property type="taxonomic scope" value="Bacteria"/>
</dbReference>
<dbReference type="HOGENOM" id="CLU_009422_4_4_7"/>
<dbReference type="OrthoDB" id="9790080at2"/>
<dbReference type="BioCyc" id="SCEL448385:SCE_RS10205-MONOMER"/>
<dbReference type="Proteomes" id="UP000002139">
    <property type="component" value="Chromosome"/>
</dbReference>
<dbReference type="GO" id="GO:0005737">
    <property type="term" value="C:cytoplasm"/>
    <property type="evidence" value="ECO:0007669"/>
    <property type="project" value="UniProtKB-SubCell"/>
</dbReference>
<dbReference type="GO" id="GO:0008650">
    <property type="term" value="F:rRNA (uridine-2'-O-)-methyltransferase activity"/>
    <property type="evidence" value="ECO:0007669"/>
    <property type="project" value="UniProtKB-UniRule"/>
</dbReference>
<dbReference type="CDD" id="cd02440">
    <property type="entry name" value="AdoMet_MTases"/>
    <property type="match status" value="1"/>
</dbReference>
<dbReference type="Gene3D" id="3.40.50.150">
    <property type="entry name" value="Vaccinia Virus protein VP39"/>
    <property type="match status" value="1"/>
</dbReference>
<dbReference type="HAMAP" id="MF_01547">
    <property type="entry name" value="RNA_methyltr_E"/>
    <property type="match status" value="1"/>
</dbReference>
<dbReference type="InterPro" id="IPR050082">
    <property type="entry name" value="RNA_methyltr_RlmE"/>
</dbReference>
<dbReference type="InterPro" id="IPR002877">
    <property type="entry name" value="RNA_MeTrfase_FtsJ_dom"/>
</dbReference>
<dbReference type="InterPro" id="IPR015507">
    <property type="entry name" value="rRNA-MeTfrase_E"/>
</dbReference>
<dbReference type="InterPro" id="IPR029063">
    <property type="entry name" value="SAM-dependent_MTases_sf"/>
</dbReference>
<dbReference type="PANTHER" id="PTHR10920">
    <property type="entry name" value="RIBOSOMAL RNA METHYLTRANSFERASE"/>
    <property type="match status" value="1"/>
</dbReference>
<dbReference type="PANTHER" id="PTHR10920:SF18">
    <property type="entry name" value="RRNA METHYLTRANSFERASE 2, MITOCHONDRIAL"/>
    <property type="match status" value="1"/>
</dbReference>
<dbReference type="Pfam" id="PF01728">
    <property type="entry name" value="FtsJ"/>
    <property type="match status" value="1"/>
</dbReference>
<dbReference type="PIRSF" id="PIRSF005461">
    <property type="entry name" value="23S_rRNA_mtase"/>
    <property type="match status" value="1"/>
</dbReference>
<dbReference type="SUPFAM" id="SSF53335">
    <property type="entry name" value="S-adenosyl-L-methionine-dependent methyltransferases"/>
    <property type="match status" value="1"/>
</dbReference>
<gene>
    <name evidence="1" type="primary">rlmE</name>
    <name evidence="1" type="synonym">ftsJ</name>
    <name evidence="1" type="synonym">rrmJ</name>
    <name type="ordered locus">sce1990</name>
</gene>
<keyword id="KW-0963">Cytoplasm</keyword>
<keyword id="KW-0489">Methyltransferase</keyword>
<keyword id="KW-1185">Reference proteome</keyword>
<keyword id="KW-0698">rRNA processing</keyword>
<keyword id="KW-0949">S-adenosyl-L-methionine</keyword>
<keyword id="KW-0808">Transferase</keyword>
<comment type="function">
    <text evidence="1">Specifically methylates the uridine in position 2552 of 23S rRNA at the 2'-O position of the ribose in the fully assembled 50S ribosomal subunit.</text>
</comment>
<comment type="catalytic activity">
    <reaction evidence="1">
        <text>uridine(2552) in 23S rRNA + S-adenosyl-L-methionine = 2'-O-methyluridine(2552) in 23S rRNA + S-adenosyl-L-homocysteine + H(+)</text>
        <dbReference type="Rhea" id="RHEA:42720"/>
        <dbReference type="Rhea" id="RHEA-COMP:10202"/>
        <dbReference type="Rhea" id="RHEA-COMP:10203"/>
        <dbReference type="ChEBI" id="CHEBI:15378"/>
        <dbReference type="ChEBI" id="CHEBI:57856"/>
        <dbReference type="ChEBI" id="CHEBI:59789"/>
        <dbReference type="ChEBI" id="CHEBI:65315"/>
        <dbReference type="ChEBI" id="CHEBI:74478"/>
        <dbReference type="EC" id="2.1.1.166"/>
    </reaction>
</comment>
<comment type="subcellular location">
    <subcellularLocation>
        <location evidence="1">Cytoplasm</location>
    </subcellularLocation>
</comment>
<comment type="similarity">
    <text evidence="1">Belongs to the class I-like SAM-binding methyltransferase superfamily. RNA methyltransferase RlmE family.</text>
</comment>
<sequence>MPAERPSVSQKPKNPYKRPDAFTKAAKAQGYPARSVFKLEEIDRRVRLLRPGQRVLDLGAAPGSWSMYAAQRIGAGGKLLAVDLSPITAAFGPQATVVQGDALSLTNEALAQFAPYDVVLSDMAPATSGSKIADQARSYELFMRAVAVAEALLAPGGAFVGKIFMSEDFVKARDALRNLCEEVRSIRPEGTRASSVEIFLVGLKRKAAGKTG</sequence>
<name>RLME_SORC5</name>
<proteinExistence type="inferred from homology"/>
<reference key="1">
    <citation type="journal article" date="2007" name="Nat. Biotechnol.">
        <title>Complete genome sequence of the myxobacterium Sorangium cellulosum.</title>
        <authorList>
            <person name="Schneiker S."/>
            <person name="Perlova O."/>
            <person name="Kaiser O."/>
            <person name="Gerth K."/>
            <person name="Alici A."/>
            <person name="Altmeyer M.O."/>
            <person name="Bartels D."/>
            <person name="Bekel T."/>
            <person name="Beyer S."/>
            <person name="Bode E."/>
            <person name="Bode H.B."/>
            <person name="Bolten C.J."/>
            <person name="Choudhuri J.V."/>
            <person name="Doss S."/>
            <person name="Elnakady Y.A."/>
            <person name="Frank B."/>
            <person name="Gaigalat L."/>
            <person name="Goesmann A."/>
            <person name="Groeger C."/>
            <person name="Gross F."/>
            <person name="Jelsbak L."/>
            <person name="Jelsbak L."/>
            <person name="Kalinowski J."/>
            <person name="Kegler C."/>
            <person name="Knauber T."/>
            <person name="Konietzny S."/>
            <person name="Kopp M."/>
            <person name="Krause L."/>
            <person name="Krug D."/>
            <person name="Linke B."/>
            <person name="Mahmud T."/>
            <person name="Martinez-Arias R."/>
            <person name="McHardy A.C."/>
            <person name="Merai M."/>
            <person name="Meyer F."/>
            <person name="Mormann S."/>
            <person name="Munoz-Dorado J."/>
            <person name="Perez J."/>
            <person name="Pradella S."/>
            <person name="Rachid S."/>
            <person name="Raddatz G."/>
            <person name="Rosenau F."/>
            <person name="Rueckert C."/>
            <person name="Sasse F."/>
            <person name="Scharfe M."/>
            <person name="Schuster S.C."/>
            <person name="Suen G."/>
            <person name="Treuner-Lange A."/>
            <person name="Velicer G.J."/>
            <person name="Vorholter F.-J."/>
            <person name="Weissman K.J."/>
            <person name="Welch R.D."/>
            <person name="Wenzel S.C."/>
            <person name="Whitworth D.E."/>
            <person name="Wilhelm S."/>
            <person name="Wittmann C."/>
            <person name="Bloecker H."/>
            <person name="Puehler A."/>
            <person name="Mueller R."/>
        </authorList>
    </citation>
    <scope>NUCLEOTIDE SEQUENCE [LARGE SCALE GENOMIC DNA]</scope>
    <source>
        <strain>So ce56</strain>
    </source>
</reference>
<protein>
    <recommendedName>
        <fullName evidence="1">Ribosomal RNA large subunit methyltransferase E</fullName>
        <ecNumber evidence="1">2.1.1.166</ecNumber>
    </recommendedName>
    <alternativeName>
        <fullName evidence="1">23S rRNA Um2552 methyltransferase</fullName>
    </alternativeName>
    <alternativeName>
        <fullName evidence="1">rRNA (uridine-2'-O-)-methyltransferase</fullName>
    </alternativeName>
</protein>
<organism>
    <name type="scientific">Sorangium cellulosum (strain So ce56)</name>
    <name type="common">Polyangium cellulosum (strain So ce56)</name>
    <dbReference type="NCBI Taxonomy" id="448385"/>
    <lineage>
        <taxon>Bacteria</taxon>
        <taxon>Pseudomonadati</taxon>
        <taxon>Myxococcota</taxon>
        <taxon>Polyangia</taxon>
        <taxon>Polyangiales</taxon>
        <taxon>Polyangiaceae</taxon>
        <taxon>Sorangium</taxon>
    </lineage>
</organism>
<evidence type="ECO:0000255" key="1">
    <source>
        <dbReference type="HAMAP-Rule" id="MF_01547"/>
    </source>
</evidence>
<evidence type="ECO:0000256" key="2">
    <source>
        <dbReference type="SAM" id="MobiDB-lite"/>
    </source>
</evidence>
<accession>A9FQE4</accession>
<feature type="chain" id="PRO_0000333324" description="Ribosomal RNA large subunit methyltransferase E">
    <location>
        <begin position="1"/>
        <end position="212"/>
    </location>
</feature>
<feature type="region of interest" description="Disordered" evidence="2">
    <location>
        <begin position="1"/>
        <end position="26"/>
    </location>
</feature>
<feature type="active site" description="Proton acceptor" evidence="1">
    <location>
        <position position="162"/>
    </location>
</feature>
<feature type="binding site" evidence="1">
    <location>
        <position position="63"/>
    </location>
    <ligand>
        <name>S-adenosyl-L-methionine</name>
        <dbReference type="ChEBI" id="CHEBI:59789"/>
    </ligand>
</feature>
<feature type="binding site" evidence="1">
    <location>
        <position position="65"/>
    </location>
    <ligand>
        <name>S-adenosyl-L-methionine</name>
        <dbReference type="ChEBI" id="CHEBI:59789"/>
    </ligand>
</feature>
<feature type="binding site" evidence="1">
    <location>
        <position position="83"/>
    </location>
    <ligand>
        <name>S-adenosyl-L-methionine</name>
        <dbReference type="ChEBI" id="CHEBI:59789"/>
    </ligand>
</feature>
<feature type="binding site" evidence="1">
    <location>
        <position position="101"/>
    </location>
    <ligand>
        <name>S-adenosyl-L-methionine</name>
        <dbReference type="ChEBI" id="CHEBI:59789"/>
    </ligand>
</feature>
<feature type="binding site" evidence="1">
    <location>
        <position position="122"/>
    </location>
    <ligand>
        <name>S-adenosyl-L-methionine</name>
        <dbReference type="ChEBI" id="CHEBI:59789"/>
    </ligand>
</feature>